<proteinExistence type="inferred from homology"/>
<keyword id="KW-0167">Capsid protein</keyword>
<keyword id="KW-0426">Late protein</keyword>
<keyword id="KW-1146">T=13 icosahedral capsid protein</keyword>
<keyword id="KW-0946">Virion</keyword>
<gene>
    <name evidence="4" type="primary">gp24</name>
</gene>
<name>CAPSP_BPT6</name>
<organismHost>
    <name type="scientific">Escherichia coli</name>
    <dbReference type="NCBI Taxonomy" id="562"/>
</organismHost>
<organism>
    <name type="scientific">Enterobacteria phage T6</name>
    <name type="common">Bacteriophage T6</name>
    <dbReference type="NCBI Taxonomy" id="10666"/>
    <lineage>
        <taxon>Viruses</taxon>
        <taxon>Duplodnaviria</taxon>
        <taxon>Heunggongvirae</taxon>
        <taxon>Uroviricota</taxon>
        <taxon>Caudoviricetes</taxon>
        <taxon>Straboviridae</taxon>
        <taxon>Tevenvirinae</taxon>
        <taxon>Tequatrovirus</taxon>
        <taxon>Tequatrovirus T6</taxon>
    </lineage>
</organism>
<evidence type="ECO:0000250" key="1">
    <source>
        <dbReference type="UniProtKB" id="P19896"/>
    </source>
</evidence>
<evidence type="ECO:0000256" key="2">
    <source>
        <dbReference type="SAM" id="MobiDB-lite"/>
    </source>
</evidence>
<evidence type="ECO:0000305" key="3"/>
<evidence type="ECO:0000312" key="4">
    <source>
        <dbReference type="EMBL" id="ACZ67495.1"/>
    </source>
</evidence>
<sequence length="21" mass="2336">MAKINELLRESTTTNSNSIGR</sequence>
<dbReference type="EMBL" id="GU187340">
    <property type="protein sequence ID" value="ACZ67495.1"/>
    <property type="molecule type" value="Genomic_DNA"/>
</dbReference>
<dbReference type="GO" id="GO:0039621">
    <property type="term" value="C:T=13 icosahedral viral capsid"/>
    <property type="evidence" value="ECO:0007669"/>
    <property type="project" value="UniProtKB-KW"/>
</dbReference>
<accession>D2K805</accession>
<reference key="1">
    <citation type="submission" date="2009-11" db="EMBL/GenBank/DDBJ databases">
        <title>Site-specific endonuclease encoded by the T4 segD gene.</title>
        <authorList>
            <person name="Sokolov A.S."/>
            <person name="Kolosov P.M."/>
            <person name="Shlyapnikov M.G."/>
            <person name="Granovsky I.E."/>
        </authorList>
    </citation>
    <scope>NUCLEOTIDE SEQUENCE [GENOMIC DNA]</scope>
</reference>
<comment type="function">
    <text evidence="1">Capsid protein that self-associates to form 11 pentons, building the T=13 laevo capsid in association with 160 hexamers of gp23* and one dodecamer of gp20.</text>
</comment>
<comment type="subunit">
    <text evidence="1">Homopentamer. A total of 55 subunits of gp24 forms the 11 pentamers. Interacts with portal protein gp20. Interacts with gp23 that forms 160 hexamers.</text>
</comment>
<comment type="subcellular location">
    <molecule>Capsid vertex protein gp24</molecule>
    <subcellularLocation>
        <location evidence="1">Virion</location>
    </subcellularLocation>
</comment>
<comment type="subcellular location">
    <molecule>Capsid vertex protein gp24*</molecule>
    <subcellularLocation>
        <location evidence="1">Virion</location>
    </subcellularLocation>
</comment>
<comment type="PTM">
    <text evidence="1">Proteolytic cleavage give rise to gp24*.</text>
</comment>
<comment type="similarity">
    <text evidence="3">Belongs to the T4 phage capsid protein family.</text>
</comment>
<feature type="chain" id="PRO_0000432340" description="Capsid vertex protein gp24">
    <location>
        <begin position="1"/>
        <end position="21" status="greater than"/>
    </location>
</feature>
<feature type="chain" id="PRO_0000432341" description="Capsid vertex protein gp24*" evidence="1">
    <location>
        <begin position="11"/>
        <end position="21" status="greater than"/>
    </location>
</feature>
<feature type="region of interest" description="Disordered" evidence="2">
    <location>
        <begin position="1"/>
        <end position="21"/>
    </location>
</feature>
<feature type="compositionally biased region" description="Polar residues" evidence="2">
    <location>
        <begin position="10"/>
        <end position="21"/>
    </location>
</feature>
<feature type="non-terminal residue" evidence="4">
    <location>
        <position position="21"/>
    </location>
</feature>
<protein>
    <recommendedName>
        <fullName evidence="1">Capsid vertex protein gp24</fullName>
    </recommendedName>
    <alternativeName>
        <fullName evidence="1">Gene product 24</fullName>
        <shortName evidence="1">gp24</shortName>
    </alternativeName>
    <component>
        <recommendedName>
            <fullName evidence="1">Capsid vertex protein gp24*</fullName>
        </recommendedName>
    </component>
</protein>